<keyword id="KW-0131">Cell cycle</keyword>
<keyword id="KW-0132">Cell division</keyword>
<sequence>MSILSFLLGEKKKTASVAKERLQIILAHERTASGAPADYLPALQRELVAVISKYVKIGNDDIKVNLERQDNLEVLEVKIEIPQA</sequence>
<protein>
    <recommendedName>
        <fullName evidence="1">Cell division topological specificity factor</fullName>
    </recommendedName>
</protein>
<proteinExistence type="inferred from homology"/>
<comment type="function">
    <text evidence="1">Prevents the cell division inhibition by proteins MinC and MinD at internal division sites while permitting inhibition at polar sites. This ensures cell division at the proper site by restricting the formation of a division septum at the midpoint of the long axis of the cell.</text>
</comment>
<comment type="similarity">
    <text evidence="1">Belongs to the MinE family.</text>
</comment>
<reference key="1">
    <citation type="submission" date="2008-05" db="EMBL/GenBank/DDBJ databases">
        <title>Complete sequence of chromosome 1 of Ralstonia pickettii 12J.</title>
        <authorList>
            <person name="Lucas S."/>
            <person name="Copeland A."/>
            <person name="Lapidus A."/>
            <person name="Glavina del Rio T."/>
            <person name="Dalin E."/>
            <person name="Tice H."/>
            <person name="Bruce D."/>
            <person name="Goodwin L."/>
            <person name="Pitluck S."/>
            <person name="Meincke L."/>
            <person name="Brettin T."/>
            <person name="Detter J.C."/>
            <person name="Han C."/>
            <person name="Kuske C.R."/>
            <person name="Schmutz J."/>
            <person name="Larimer F."/>
            <person name="Land M."/>
            <person name="Hauser L."/>
            <person name="Kyrpides N."/>
            <person name="Mikhailova N."/>
            <person name="Marsh T."/>
            <person name="Richardson P."/>
        </authorList>
    </citation>
    <scope>NUCLEOTIDE SEQUENCE [LARGE SCALE GENOMIC DNA]</scope>
    <source>
        <strain>12J</strain>
    </source>
</reference>
<feature type="chain" id="PRO_1000114235" description="Cell division topological specificity factor">
    <location>
        <begin position="1"/>
        <end position="84"/>
    </location>
</feature>
<gene>
    <name evidence="1" type="primary">minE</name>
    <name type="ordered locus">Rpic_3563</name>
</gene>
<accession>B2UGZ9</accession>
<organism>
    <name type="scientific">Ralstonia pickettii (strain 12J)</name>
    <dbReference type="NCBI Taxonomy" id="402626"/>
    <lineage>
        <taxon>Bacteria</taxon>
        <taxon>Pseudomonadati</taxon>
        <taxon>Pseudomonadota</taxon>
        <taxon>Betaproteobacteria</taxon>
        <taxon>Burkholderiales</taxon>
        <taxon>Burkholderiaceae</taxon>
        <taxon>Ralstonia</taxon>
    </lineage>
</organism>
<evidence type="ECO:0000255" key="1">
    <source>
        <dbReference type="HAMAP-Rule" id="MF_00262"/>
    </source>
</evidence>
<dbReference type="EMBL" id="CP001068">
    <property type="protein sequence ID" value="ACD28682.1"/>
    <property type="molecule type" value="Genomic_DNA"/>
</dbReference>
<dbReference type="SMR" id="B2UGZ9"/>
<dbReference type="STRING" id="402626.Rpic_3563"/>
<dbReference type="KEGG" id="rpi:Rpic_3563"/>
<dbReference type="eggNOG" id="COG0851">
    <property type="taxonomic scope" value="Bacteria"/>
</dbReference>
<dbReference type="HOGENOM" id="CLU_137929_2_1_4"/>
<dbReference type="GO" id="GO:0051301">
    <property type="term" value="P:cell division"/>
    <property type="evidence" value="ECO:0007669"/>
    <property type="project" value="UniProtKB-KW"/>
</dbReference>
<dbReference type="GO" id="GO:0032955">
    <property type="term" value="P:regulation of division septum assembly"/>
    <property type="evidence" value="ECO:0007669"/>
    <property type="project" value="InterPro"/>
</dbReference>
<dbReference type="FunFam" id="3.30.1070.10:FF:000001">
    <property type="entry name" value="Cell division topological specificity factor"/>
    <property type="match status" value="1"/>
</dbReference>
<dbReference type="Gene3D" id="3.30.1070.10">
    <property type="entry name" value="Cell division topological specificity factor MinE"/>
    <property type="match status" value="1"/>
</dbReference>
<dbReference type="HAMAP" id="MF_00262">
    <property type="entry name" value="MinE"/>
    <property type="match status" value="1"/>
</dbReference>
<dbReference type="InterPro" id="IPR005527">
    <property type="entry name" value="MinE"/>
</dbReference>
<dbReference type="InterPro" id="IPR036707">
    <property type="entry name" value="MinE_sf"/>
</dbReference>
<dbReference type="NCBIfam" id="TIGR01215">
    <property type="entry name" value="minE"/>
    <property type="match status" value="1"/>
</dbReference>
<dbReference type="NCBIfam" id="NF001422">
    <property type="entry name" value="PRK00296.1"/>
    <property type="match status" value="1"/>
</dbReference>
<dbReference type="NCBIfam" id="NF010595">
    <property type="entry name" value="PRK13989.1"/>
    <property type="match status" value="1"/>
</dbReference>
<dbReference type="Pfam" id="PF03776">
    <property type="entry name" value="MinE"/>
    <property type="match status" value="1"/>
</dbReference>
<dbReference type="SUPFAM" id="SSF55229">
    <property type="entry name" value="Cell division protein MinE topological specificity domain"/>
    <property type="match status" value="1"/>
</dbReference>
<name>MINE_RALPJ</name>